<accession>B7M5T8</accession>
<proteinExistence type="inferred from homology"/>
<feature type="chain" id="PRO_0000383511" description="Probable 4-deoxy-4-formamido-L-arabinose-phosphoundecaprenol deformylase ArnD">
    <location>
        <begin position="1"/>
        <end position="296"/>
    </location>
</feature>
<feature type="domain" description="NodB homology" evidence="1">
    <location>
        <begin position="2"/>
        <end position="260"/>
    </location>
</feature>
<organism>
    <name type="scientific">Escherichia coli O8 (strain IAI1)</name>
    <dbReference type="NCBI Taxonomy" id="585034"/>
    <lineage>
        <taxon>Bacteria</taxon>
        <taxon>Pseudomonadati</taxon>
        <taxon>Pseudomonadota</taxon>
        <taxon>Gammaproteobacteria</taxon>
        <taxon>Enterobacterales</taxon>
        <taxon>Enterobacteriaceae</taxon>
        <taxon>Escherichia</taxon>
    </lineage>
</organism>
<dbReference type="EC" id="3.5.1.n3" evidence="1"/>
<dbReference type="EMBL" id="CU928160">
    <property type="protein sequence ID" value="CAQ99175.1"/>
    <property type="molecule type" value="Genomic_DNA"/>
</dbReference>
<dbReference type="RefSeq" id="WP_000169737.1">
    <property type="nucleotide sequence ID" value="NC_011741.1"/>
</dbReference>
<dbReference type="SMR" id="B7M5T8"/>
<dbReference type="GeneID" id="75172387"/>
<dbReference type="KEGG" id="ecr:ECIAI1_2332"/>
<dbReference type="HOGENOM" id="CLU_084199_0_0_6"/>
<dbReference type="UniPathway" id="UPA00030"/>
<dbReference type="UniPathway" id="UPA00036">
    <property type="reaction ID" value="UER00496"/>
</dbReference>
<dbReference type="GO" id="GO:0016020">
    <property type="term" value="C:membrane"/>
    <property type="evidence" value="ECO:0007669"/>
    <property type="project" value="GOC"/>
</dbReference>
<dbReference type="GO" id="GO:0016811">
    <property type="term" value="F:hydrolase activity, acting on carbon-nitrogen (but not peptide) bonds, in linear amides"/>
    <property type="evidence" value="ECO:0007669"/>
    <property type="project" value="UniProtKB-UniRule"/>
</dbReference>
<dbReference type="GO" id="GO:0036108">
    <property type="term" value="P:4-amino-4-deoxy-alpha-L-arabinopyranosyl undecaprenyl phosphate biosynthetic process"/>
    <property type="evidence" value="ECO:0007669"/>
    <property type="project" value="UniProtKB-UniRule"/>
</dbReference>
<dbReference type="GO" id="GO:0009245">
    <property type="term" value="P:lipid A biosynthetic process"/>
    <property type="evidence" value="ECO:0007669"/>
    <property type="project" value="UniProtKB-UniRule"/>
</dbReference>
<dbReference type="GO" id="GO:0009103">
    <property type="term" value="P:lipopolysaccharide biosynthetic process"/>
    <property type="evidence" value="ECO:0007669"/>
    <property type="project" value="UniProtKB-UniRule"/>
</dbReference>
<dbReference type="GO" id="GO:0046677">
    <property type="term" value="P:response to antibiotic"/>
    <property type="evidence" value="ECO:0007669"/>
    <property type="project" value="UniProtKB-KW"/>
</dbReference>
<dbReference type="CDD" id="cd10939">
    <property type="entry name" value="CE4_ArnD"/>
    <property type="match status" value="1"/>
</dbReference>
<dbReference type="Gene3D" id="3.20.20.370">
    <property type="entry name" value="Glycoside hydrolase/deacetylase"/>
    <property type="match status" value="1"/>
</dbReference>
<dbReference type="HAMAP" id="MF_01870">
    <property type="entry name" value="ArnD"/>
    <property type="match status" value="1"/>
</dbReference>
<dbReference type="InterPro" id="IPR023557">
    <property type="entry name" value="ArnD"/>
</dbReference>
<dbReference type="InterPro" id="IPR011330">
    <property type="entry name" value="Glyco_hydro/deAcase_b/a-brl"/>
</dbReference>
<dbReference type="InterPro" id="IPR002509">
    <property type="entry name" value="NODB_dom"/>
</dbReference>
<dbReference type="InterPro" id="IPR050248">
    <property type="entry name" value="Polysacc_deacetylase_ArnD"/>
</dbReference>
<dbReference type="NCBIfam" id="NF011923">
    <property type="entry name" value="PRK15394.1"/>
    <property type="match status" value="1"/>
</dbReference>
<dbReference type="PANTHER" id="PTHR10587:SF137">
    <property type="entry name" value="4-DEOXY-4-FORMAMIDO-L-ARABINOSE-PHOSPHOUNDECAPRENOL DEFORMYLASE ARND-RELATED"/>
    <property type="match status" value="1"/>
</dbReference>
<dbReference type="PANTHER" id="PTHR10587">
    <property type="entry name" value="GLYCOSYL TRANSFERASE-RELATED"/>
    <property type="match status" value="1"/>
</dbReference>
<dbReference type="Pfam" id="PF01522">
    <property type="entry name" value="Polysacc_deac_1"/>
    <property type="match status" value="1"/>
</dbReference>
<dbReference type="SUPFAM" id="SSF88713">
    <property type="entry name" value="Glycoside hydrolase/deacetylase"/>
    <property type="match status" value="1"/>
</dbReference>
<dbReference type="PROSITE" id="PS51677">
    <property type="entry name" value="NODB"/>
    <property type="match status" value="1"/>
</dbReference>
<evidence type="ECO:0000255" key="1">
    <source>
        <dbReference type="HAMAP-Rule" id="MF_01870"/>
    </source>
</evidence>
<name>ARND_ECO8A</name>
<gene>
    <name evidence="1" type="primary">arnD</name>
    <name type="ordered locus">ECIAI1_2332</name>
</gene>
<protein>
    <recommendedName>
        <fullName evidence="1">Probable 4-deoxy-4-formamido-L-arabinose-phosphoundecaprenol deformylase ArnD</fullName>
        <ecNumber evidence="1">3.5.1.n3</ecNumber>
    </recommendedName>
</protein>
<comment type="function">
    <text evidence="1">Catalyzes the deformylation of 4-deoxy-4-formamido-L-arabinose-phosphoundecaprenol to 4-amino-4-deoxy-L-arabinose-phosphoundecaprenol. The modified arabinose is attached to lipid A and is required for resistance to polymyxin and cationic antimicrobial peptides.</text>
</comment>
<comment type="catalytic activity">
    <reaction evidence="1">
        <text>4-deoxy-4-formamido-alpha-L-arabinopyranosyl di-trans,octa-cis-undecaprenyl phosphate + H2O = 4-amino-4-deoxy-alpha-L-arabinopyranosyl di-trans,octa-cis-undecaprenyl phosphate + formate</text>
        <dbReference type="Rhea" id="RHEA:27734"/>
        <dbReference type="ChEBI" id="CHEBI:15377"/>
        <dbReference type="ChEBI" id="CHEBI:15740"/>
        <dbReference type="ChEBI" id="CHEBI:58909"/>
        <dbReference type="ChEBI" id="CHEBI:60463"/>
        <dbReference type="EC" id="3.5.1.n3"/>
    </reaction>
</comment>
<comment type="pathway">
    <text evidence="1">Glycolipid biosynthesis; 4-amino-4-deoxy-alpha-L-arabinose undecaprenyl phosphate biosynthesis; 4-amino-4-deoxy-alpha-L-arabinose undecaprenyl phosphate from UDP-4-deoxy-4-formamido-beta-L-arabinose and undecaprenyl phosphate: step 2/2.</text>
</comment>
<comment type="pathway">
    <text evidence="1">Bacterial outer membrane biogenesis; lipopolysaccharide biosynthesis.</text>
</comment>
<comment type="similarity">
    <text evidence="1">Belongs to the polysaccharide deacetylase family. ArnD deformylase subfamily.</text>
</comment>
<reference key="1">
    <citation type="journal article" date="2009" name="PLoS Genet.">
        <title>Organised genome dynamics in the Escherichia coli species results in highly diverse adaptive paths.</title>
        <authorList>
            <person name="Touchon M."/>
            <person name="Hoede C."/>
            <person name="Tenaillon O."/>
            <person name="Barbe V."/>
            <person name="Baeriswyl S."/>
            <person name="Bidet P."/>
            <person name="Bingen E."/>
            <person name="Bonacorsi S."/>
            <person name="Bouchier C."/>
            <person name="Bouvet O."/>
            <person name="Calteau A."/>
            <person name="Chiapello H."/>
            <person name="Clermont O."/>
            <person name="Cruveiller S."/>
            <person name="Danchin A."/>
            <person name="Diard M."/>
            <person name="Dossat C."/>
            <person name="Karoui M.E."/>
            <person name="Frapy E."/>
            <person name="Garry L."/>
            <person name="Ghigo J.M."/>
            <person name="Gilles A.M."/>
            <person name="Johnson J."/>
            <person name="Le Bouguenec C."/>
            <person name="Lescat M."/>
            <person name="Mangenot S."/>
            <person name="Martinez-Jehanne V."/>
            <person name="Matic I."/>
            <person name="Nassif X."/>
            <person name="Oztas S."/>
            <person name="Petit M.A."/>
            <person name="Pichon C."/>
            <person name="Rouy Z."/>
            <person name="Ruf C.S."/>
            <person name="Schneider D."/>
            <person name="Tourret J."/>
            <person name="Vacherie B."/>
            <person name="Vallenet D."/>
            <person name="Medigue C."/>
            <person name="Rocha E.P.C."/>
            <person name="Denamur E."/>
        </authorList>
    </citation>
    <scope>NUCLEOTIDE SEQUENCE [LARGE SCALE GENOMIC DNA]</scope>
    <source>
        <strain>IAI1</strain>
    </source>
</reference>
<keyword id="KW-0046">Antibiotic resistance</keyword>
<keyword id="KW-0378">Hydrolase</keyword>
<keyword id="KW-0441">Lipid A biosynthesis</keyword>
<keyword id="KW-0444">Lipid biosynthesis</keyword>
<keyword id="KW-0443">Lipid metabolism</keyword>
<keyword id="KW-0448">Lipopolysaccharide biosynthesis</keyword>
<sequence length="296" mass="33112">MTKVGLRIDVDTFRGTREGVPRLLEILSKHNIQASIFFSVGPDNMGRHLWRLVKPQFLWKMLRSNAASLYGWDILLAGTAWPGKEIGHANADIIREAAKHHEVGLHAWDHHAWQARSGNWDRQTMIDDIARGLRTLEEIIGQPVTCSAAAGWRADQQVIEAKEAFHLRYNSDCRGAMPFRPLLESGNPGTAQIPVTLPTWDEVIGRDVKAEDFNGWLLNRILRDKGTPVYTIHAEVEGCAYQHNFVDLLKRAAQEGVTFCPLSELLSETLPLGQVVRGNIAGREGWLGCQQIAGSR</sequence>